<feature type="chain" id="PRO_1000017064" description="tRNA pseudouridine synthase A">
    <location>
        <begin position="1"/>
        <end position="241"/>
    </location>
</feature>
<feature type="active site" description="Nucleophile" evidence="1">
    <location>
        <position position="51"/>
    </location>
</feature>
<feature type="binding site" evidence="1">
    <location>
        <position position="110"/>
    </location>
    <ligand>
        <name>substrate</name>
    </ligand>
</feature>
<reference key="1">
    <citation type="submission" date="2007-07" db="EMBL/GenBank/DDBJ databases">
        <title>Complete genome sequence of Campylobacter jejuni subsp doylei 269.97 isolated from human blood.</title>
        <authorList>
            <person name="Fouts D.E."/>
            <person name="Mongodin E.F."/>
            <person name="Puiu D."/>
            <person name="Sebastian Y."/>
            <person name="Miller W.G."/>
            <person name="Mandrell R.E."/>
            <person name="Lastovica A.J."/>
            <person name="Nelson K.E."/>
        </authorList>
    </citation>
    <scope>NUCLEOTIDE SEQUENCE [LARGE SCALE GENOMIC DNA]</scope>
    <source>
        <strain>ATCC BAA-1458 / RM4099 / 269.97</strain>
    </source>
</reference>
<evidence type="ECO:0000255" key="1">
    <source>
        <dbReference type="HAMAP-Rule" id="MF_00171"/>
    </source>
</evidence>
<dbReference type="EC" id="5.4.99.12" evidence="1"/>
<dbReference type="EMBL" id="CP000768">
    <property type="protein sequence ID" value="ABS43319.1"/>
    <property type="molecule type" value="Genomic_DNA"/>
</dbReference>
<dbReference type="SMR" id="A7H426"/>
<dbReference type="KEGG" id="cjd:JJD26997_1186"/>
<dbReference type="HOGENOM" id="CLU_014673_0_1_7"/>
<dbReference type="Proteomes" id="UP000002302">
    <property type="component" value="Chromosome"/>
</dbReference>
<dbReference type="GO" id="GO:0003723">
    <property type="term" value="F:RNA binding"/>
    <property type="evidence" value="ECO:0007669"/>
    <property type="project" value="InterPro"/>
</dbReference>
<dbReference type="GO" id="GO:0160147">
    <property type="term" value="F:tRNA pseudouridine(38-40) synthase activity"/>
    <property type="evidence" value="ECO:0007669"/>
    <property type="project" value="UniProtKB-EC"/>
</dbReference>
<dbReference type="GO" id="GO:0031119">
    <property type="term" value="P:tRNA pseudouridine synthesis"/>
    <property type="evidence" value="ECO:0007669"/>
    <property type="project" value="UniProtKB-UniRule"/>
</dbReference>
<dbReference type="CDD" id="cd02570">
    <property type="entry name" value="PseudoU_synth_EcTruA"/>
    <property type="match status" value="1"/>
</dbReference>
<dbReference type="Gene3D" id="3.30.70.660">
    <property type="entry name" value="Pseudouridine synthase I, catalytic domain, C-terminal subdomain"/>
    <property type="match status" value="1"/>
</dbReference>
<dbReference type="Gene3D" id="3.30.70.580">
    <property type="entry name" value="Pseudouridine synthase I, catalytic domain, N-terminal subdomain"/>
    <property type="match status" value="1"/>
</dbReference>
<dbReference type="HAMAP" id="MF_00171">
    <property type="entry name" value="TruA"/>
    <property type="match status" value="1"/>
</dbReference>
<dbReference type="InterPro" id="IPR020103">
    <property type="entry name" value="PsdUridine_synth_cat_dom_sf"/>
</dbReference>
<dbReference type="InterPro" id="IPR001406">
    <property type="entry name" value="PsdUridine_synth_TruA"/>
</dbReference>
<dbReference type="InterPro" id="IPR020097">
    <property type="entry name" value="PsdUridine_synth_TruA_a/b_dom"/>
</dbReference>
<dbReference type="InterPro" id="IPR020095">
    <property type="entry name" value="PsdUridine_synth_TruA_C"/>
</dbReference>
<dbReference type="InterPro" id="IPR020094">
    <property type="entry name" value="TruA/RsuA/RluB/E/F_N"/>
</dbReference>
<dbReference type="NCBIfam" id="TIGR00071">
    <property type="entry name" value="hisT_truA"/>
    <property type="match status" value="1"/>
</dbReference>
<dbReference type="PANTHER" id="PTHR11142">
    <property type="entry name" value="PSEUDOURIDYLATE SYNTHASE"/>
    <property type="match status" value="1"/>
</dbReference>
<dbReference type="PANTHER" id="PTHR11142:SF0">
    <property type="entry name" value="TRNA PSEUDOURIDINE SYNTHASE-LIKE 1"/>
    <property type="match status" value="1"/>
</dbReference>
<dbReference type="Pfam" id="PF01416">
    <property type="entry name" value="PseudoU_synth_1"/>
    <property type="match status" value="2"/>
</dbReference>
<dbReference type="PIRSF" id="PIRSF001430">
    <property type="entry name" value="tRNA_psdUrid_synth"/>
    <property type="match status" value="1"/>
</dbReference>
<dbReference type="SUPFAM" id="SSF55120">
    <property type="entry name" value="Pseudouridine synthase"/>
    <property type="match status" value="1"/>
</dbReference>
<name>TRUA_CAMJD</name>
<protein>
    <recommendedName>
        <fullName evidence="1">tRNA pseudouridine synthase A</fullName>
        <ecNumber evidence="1">5.4.99.12</ecNumber>
    </recommendedName>
    <alternativeName>
        <fullName evidence="1">tRNA pseudouridine(38-40) synthase</fullName>
    </alternativeName>
    <alternativeName>
        <fullName evidence="1">tRNA pseudouridylate synthase I</fullName>
    </alternativeName>
    <alternativeName>
        <fullName evidence="1">tRNA-uridine isomerase I</fullName>
    </alternativeName>
</protein>
<accession>A7H426</accession>
<sequence>MMKIKIIFSYDGSAFLGSATQPHKKGVQDVLSEALSHLGIFSPLLMASRTDKGVHASYAVASVECGDHFVNLEYLQKQLNKFSHPFIHIKKIEKVKDDFEVRFDVKSREYRYIFSHSSYSPFMASYVYFYPKFDLGKANELLGFFVGKKDLKFFCKSGGDNKTTLREIFIARAYAYKDFSIFHFKANGFLRGQIRLSVASVLKVLEGKMSEKELKEQIEAKKQCNHFLAPPNGLYLSRICY</sequence>
<comment type="function">
    <text evidence="1">Formation of pseudouridine at positions 38, 39 and 40 in the anticodon stem and loop of transfer RNAs.</text>
</comment>
<comment type="catalytic activity">
    <reaction evidence="1">
        <text>uridine(38/39/40) in tRNA = pseudouridine(38/39/40) in tRNA</text>
        <dbReference type="Rhea" id="RHEA:22376"/>
        <dbReference type="Rhea" id="RHEA-COMP:10085"/>
        <dbReference type="Rhea" id="RHEA-COMP:10087"/>
        <dbReference type="ChEBI" id="CHEBI:65314"/>
        <dbReference type="ChEBI" id="CHEBI:65315"/>
        <dbReference type="EC" id="5.4.99.12"/>
    </reaction>
</comment>
<comment type="subunit">
    <text evidence="1">Homodimer.</text>
</comment>
<comment type="similarity">
    <text evidence="1">Belongs to the tRNA pseudouridine synthase TruA family.</text>
</comment>
<proteinExistence type="inferred from homology"/>
<gene>
    <name evidence="1" type="primary">truA</name>
    <name type="ordered locus">JJD26997_1186</name>
</gene>
<organism>
    <name type="scientific">Campylobacter jejuni subsp. doylei (strain ATCC BAA-1458 / RM4099 / 269.97)</name>
    <dbReference type="NCBI Taxonomy" id="360109"/>
    <lineage>
        <taxon>Bacteria</taxon>
        <taxon>Pseudomonadati</taxon>
        <taxon>Campylobacterota</taxon>
        <taxon>Epsilonproteobacteria</taxon>
        <taxon>Campylobacterales</taxon>
        <taxon>Campylobacteraceae</taxon>
        <taxon>Campylobacter</taxon>
    </lineage>
</organism>
<keyword id="KW-0413">Isomerase</keyword>
<keyword id="KW-0819">tRNA processing</keyword>